<proteinExistence type="inferred from homology"/>
<evidence type="ECO:0000255" key="1">
    <source>
        <dbReference type="HAMAP-Rule" id="MF_00110"/>
    </source>
</evidence>
<sequence length="359" mass="37865">MITVNVDLGDRAYPIHIGAGLIGRTELFAPHIKGSSVTIVTNTTVDPLYGDALRAALAPLGKRVSTVVLPDGEAYKNWETLNLIFDGLLTDHADRKTTLVALGGGVVGDMTGFAAACYMRGVPFIQVPTTLLSQVDSSVGGKTGINHPLGKNMIGAFYQPQAVIADIGALTTLPDRELAAGVAEVIKTGAIADAGFFDWIEANVEALNRREPAALAHAVKRSCEIKASVVAADEREGGLRAILNFGHTFGHAIEAGLGYGEWLHGEAVGCGMVMAGDLSVRLGLLDEASRQRLDAVIAAAHLPTRGPALGDARYMDLMRVDKKAEAGAIKFILLKRFGDTLITQAPDEAVFATLAQTTR</sequence>
<name>AROB_BURO1</name>
<gene>
    <name evidence="1" type="primary">aroB</name>
    <name type="ordered locus">Bcen_2714</name>
</gene>
<protein>
    <recommendedName>
        <fullName evidence="1">3-dehydroquinate synthase</fullName>
        <shortName evidence="1">DHQS</shortName>
        <ecNumber evidence="1">4.2.3.4</ecNumber>
    </recommendedName>
</protein>
<accession>Q1BRZ3</accession>
<dbReference type="EC" id="4.2.3.4" evidence="1"/>
<dbReference type="EMBL" id="CP000378">
    <property type="protein sequence ID" value="ABF77612.1"/>
    <property type="molecule type" value="Genomic_DNA"/>
</dbReference>
<dbReference type="SMR" id="Q1BRZ3"/>
<dbReference type="HOGENOM" id="CLU_001201_0_2_4"/>
<dbReference type="UniPathway" id="UPA00053">
    <property type="reaction ID" value="UER00085"/>
</dbReference>
<dbReference type="GO" id="GO:0005737">
    <property type="term" value="C:cytoplasm"/>
    <property type="evidence" value="ECO:0007669"/>
    <property type="project" value="UniProtKB-SubCell"/>
</dbReference>
<dbReference type="GO" id="GO:0003856">
    <property type="term" value="F:3-dehydroquinate synthase activity"/>
    <property type="evidence" value="ECO:0007669"/>
    <property type="project" value="UniProtKB-UniRule"/>
</dbReference>
<dbReference type="GO" id="GO:0046872">
    <property type="term" value="F:metal ion binding"/>
    <property type="evidence" value="ECO:0007669"/>
    <property type="project" value="UniProtKB-KW"/>
</dbReference>
<dbReference type="GO" id="GO:0000166">
    <property type="term" value="F:nucleotide binding"/>
    <property type="evidence" value="ECO:0007669"/>
    <property type="project" value="UniProtKB-KW"/>
</dbReference>
<dbReference type="GO" id="GO:0008652">
    <property type="term" value="P:amino acid biosynthetic process"/>
    <property type="evidence" value="ECO:0007669"/>
    <property type="project" value="UniProtKB-KW"/>
</dbReference>
<dbReference type="GO" id="GO:0009073">
    <property type="term" value="P:aromatic amino acid family biosynthetic process"/>
    <property type="evidence" value="ECO:0007669"/>
    <property type="project" value="UniProtKB-KW"/>
</dbReference>
<dbReference type="GO" id="GO:0009423">
    <property type="term" value="P:chorismate biosynthetic process"/>
    <property type="evidence" value="ECO:0007669"/>
    <property type="project" value="UniProtKB-UniRule"/>
</dbReference>
<dbReference type="CDD" id="cd08195">
    <property type="entry name" value="DHQS"/>
    <property type="match status" value="1"/>
</dbReference>
<dbReference type="FunFam" id="3.40.50.1970:FF:000001">
    <property type="entry name" value="3-dehydroquinate synthase"/>
    <property type="match status" value="1"/>
</dbReference>
<dbReference type="Gene3D" id="3.40.50.1970">
    <property type="match status" value="1"/>
</dbReference>
<dbReference type="Gene3D" id="1.20.1090.10">
    <property type="entry name" value="Dehydroquinate synthase-like - alpha domain"/>
    <property type="match status" value="1"/>
</dbReference>
<dbReference type="HAMAP" id="MF_00110">
    <property type="entry name" value="DHQ_synthase"/>
    <property type="match status" value="1"/>
</dbReference>
<dbReference type="InterPro" id="IPR050071">
    <property type="entry name" value="Dehydroquinate_synthase"/>
</dbReference>
<dbReference type="InterPro" id="IPR016037">
    <property type="entry name" value="DHQ_synth_AroB"/>
</dbReference>
<dbReference type="InterPro" id="IPR030963">
    <property type="entry name" value="DHQ_synth_fam"/>
</dbReference>
<dbReference type="InterPro" id="IPR030960">
    <property type="entry name" value="DHQS/DOIS_N"/>
</dbReference>
<dbReference type="InterPro" id="IPR056179">
    <property type="entry name" value="DHQS_C"/>
</dbReference>
<dbReference type="NCBIfam" id="TIGR01357">
    <property type="entry name" value="aroB"/>
    <property type="match status" value="1"/>
</dbReference>
<dbReference type="PANTHER" id="PTHR43622">
    <property type="entry name" value="3-DEHYDROQUINATE SYNTHASE"/>
    <property type="match status" value="1"/>
</dbReference>
<dbReference type="PANTHER" id="PTHR43622:SF7">
    <property type="entry name" value="3-DEHYDROQUINATE SYNTHASE, CHLOROPLASTIC"/>
    <property type="match status" value="1"/>
</dbReference>
<dbReference type="Pfam" id="PF01761">
    <property type="entry name" value="DHQ_synthase"/>
    <property type="match status" value="1"/>
</dbReference>
<dbReference type="Pfam" id="PF24621">
    <property type="entry name" value="DHQS_C"/>
    <property type="match status" value="1"/>
</dbReference>
<dbReference type="PIRSF" id="PIRSF001455">
    <property type="entry name" value="DHQ_synth"/>
    <property type="match status" value="1"/>
</dbReference>
<dbReference type="SUPFAM" id="SSF56796">
    <property type="entry name" value="Dehydroquinate synthase-like"/>
    <property type="match status" value="1"/>
</dbReference>
<keyword id="KW-0028">Amino-acid biosynthesis</keyword>
<keyword id="KW-0057">Aromatic amino acid biosynthesis</keyword>
<keyword id="KW-0170">Cobalt</keyword>
<keyword id="KW-0963">Cytoplasm</keyword>
<keyword id="KW-0456">Lyase</keyword>
<keyword id="KW-0479">Metal-binding</keyword>
<keyword id="KW-0520">NAD</keyword>
<keyword id="KW-0547">Nucleotide-binding</keyword>
<keyword id="KW-0862">Zinc</keyword>
<feature type="chain" id="PRO_1000094469" description="3-dehydroquinate synthase">
    <location>
        <begin position="1"/>
        <end position="359"/>
    </location>
</feature>
<feature type="binding site" evidence="1">
    <location>
        <begin position="71"/>
        <end position="76"/>
    </location>
    <ligand>
        <name>NAD(+)</name>
        <dbReference type="ChEBI" id="CHEBI:57540"/>
    </ligand>
</feature>
<feature type="binding site" evidence="1">
    <location>
        <begin position="105"/>
        <end position="109"/>
    </location>
    <ligand>
        <name>NAD(+)</name>
        <dbReference type="ChEBI" id="CHEBI:57540"/>
    </ligand>
</feature>
<feature type="binding site" evidence="1">
    <location>
        <begin position="129"/>
        <end position="130"/>
    </location>
    <ligand>
        <name>NAD(+)</name>
        <dbReference type="ChEBI" id="CHEBI:57540"/>
    </ligand>
</feature>
<feature type="binding site" evidence="1">
    <location>
        <position position="142"/>
    </location>
    <ligand>
        <name>NAD(+)</name>
        <dbReference type="ChEBI" id="CHEBI:57540"/>
    </ligand>
</feature>
<feature type="binding site" evidence="1">
    <location>
        <position position="151"/>
    </location>
    <ligand>
        <name>NAD(+)</name>
        <dbReference type="ChEBI" id="CHEBI:57540"/>
    </ligand>
</feature>
<feature type="binding site" evidence="1">
    <location>
        <position position="184"/>
    </location>
    <ligand>
        <name>Zn(2+)</name>
        <dbReference type="ChEBI" id="CHEBI:29105"/>
    </ligand>
</feature>
<feature type="binding site" evidence="1">
    <location>
        <position position="247"/>
    </location>
    <ligand>
        <name>Zn(2+)</name>
        <dbReference type="ChEBI" id="CHEBI:29105"/>
    </ligand>
</feature>
<feature type="binding site" evidence="1">
    <location>
        <position position="264"/>
    </location>
    <ligand>
        <name>Zn(2+)</name>
        <dbReference type="ChEBI" id="CHEBI:29105"/>
    </ligand>
</feature>
<comment type="function">
    <text evidence="1">Catalyzes the conversion of 3-deoxy-D-arabino-heptulosonate 7-phosphate (DAHP) to dehydroquinate (DHQ).</text>
</comment>
<comment type="catalytic activity">
    <reaction evidence="1">
        <text>7-phospho-2-dehydro-3-deoxy-D-arabino-heptonate = 3-dehydroquinate + phosphate</text>
        <dbReference type="Rhea" id="RHEA:21968"/>
        <dbReference type="ChEBI" id="CHEBI:32364"/>
        <dbReference type="ChEBI" id="CHEBI:43474"/>
        <dbReference type="ChEBI" id="CHEBI:58394"/>
        <dbReference type="EC" id="4.2.3.4"/>
    </reaction>
</comment>
<comment type="cofactor">
    <cofactor evidence="1">
        <name>Co(2+)</name>
        <dbReference type="ChEBI" id="CHEBI:48828"/>
    </cofactor>
    <cofactor evidence="1">
        <name>Zn(2+)</name>
        <dbReference type="ChEBI" id="CHEBI:29105"/>
    </cofactor>
    <text evidence="1">Binds 1 divalent metal cation per subunit. Can use either Co(2+) or Zn(2+).</text>
</comment>
<comment type="cofactor">
    <cofactor evidence="1">
        <name>NAD(+)</name>
        <dbReference type="ChEBI" id="CHEBI:57540"/>
    </cofactor>
</comment>
<comment type="pathway">
    <text evidence="1">Metabolic intermediate biosynthesis; chorismate biosynthesis; chorismate from D-erythrose 4-phosphate and phosphoenolpyruvate: step 2/7.</text>
</comment>
<comment type="subcellular location">
    <subcellularLocation>
        <location evidence="1">Cytoplasm</location>
    </subcellularLocation>
</comment>
<comment type="similarity">
    <text evidence="1">Belongs to the sugar phosphate cyclases superfamily. Dehydroquinate synthase family.</text>
</comment>
<reference key="1">
    <citation type="submission" date="2006-05" db="EMBL/GenBank/DDBJ databases">
        <title>Complete sequence of chromosome 1 of Burkholderia cenocepacia AU 1054.</title>
        <authorList>
            <consortium name="US DOE Joint Genome Institute"/>
            <person name="Copeland A."/>
            <person name="Lucas S."/>
            <person name="Lapidus A."/>
            <person name="Barry K."/>
            <person name="Detter J.C."/>
            <person name="Glavina del Rio T."/>
            <person name="Hammon N."/>
            <person name="Israni S."/>
            <person name="Dalin E."/>
            <person name="Tice H."/>
            <person name="Pitluck S."/>
            <person name="Chain P."/>
            <person name="Malfatti S."/>
            <person name="Shin M."/>
            <person name="Vergez L."/>
            <person name="Schmutz J."/>
            <person name="Larimer F."/>
            <person name="Land M."/>
            <person name="Hauser L."/>
            <person name="Kyrpides N."/>
            <person name="Lykidis A."/>
            <person name="LiPuma J.J."/>
            <person name="Konstantinidis K."/>
            <person name="Tiedje J.M."/>
            <person name="Richardson P."/>
        </authorList>
    </citation>
    <scope>NUCLEOTIDE SEQUENCE [LARGE SCALE GENOMIC DNA]</scope>
    <source>
        <strain>AU 1054</strain>
    </source>
</reference>
<organism>
    <name type="scientific">Burkholderia orbicola (strain AU 1054)</name>
    <dbReference type="NCBI Taxonomy" id="331271"/>
    <lineage>
        <taxon>Bacteria</taxon>
        <taxon>Pseudomonadati</taxon>
        <taxon>Pseudomonadota</taxon>
        <taxon>Betaproteobacteria</taxon>
        <taxon>Burkholderiales</taxon>
        <taxon>Burkholderiaceae</taxon>
        <taxon>Burkholderia</taxon>
        <taxon>Burkholderia cepacia complex</taxon>
        <taxon>Burkholderia orbicola</taxon>
    </lineage>
</organism>